<organism>
    <name type="scientific">Acinetobacter baumannii (strain SDF)</name>
    <dbReference type="NCBI Taxonomy" id="509170"/>
    <lineage>
        <taxon>Bacteria</taxon>
        <taxon>Pseudomonadati</taxon>
        <taxon>Pseudomonadota</taxon>
        <taxon>Gammaproteobacteria</taxon>
        <taxon>Moraxellales</taxon>
        <taxon>Moraxellaceae</taxon>
        <taxon>Acinetobacter</taxon>
        <taxon>Acinetobacter calcoaceticus/baumannii complex</taxon>
    </lineage>
</organism>
<gene>
    <name evidence="1" type="primary">tmk</name>
    <name type="ordered locus">ABSDF0943</name>
</gene>
<feature type="chain" id="PRO_1000097367" description="Thymidylate kinase">
    <location>
        <begin position="1"/>
        <end position="199"/>
    </location>
</feature>
<feature type="binding site" evidence="1">
    <location>
        <begin position="7"/>
        <end position="14"/>
    </location>
    <ligand>
        <name>ATP</name>
        <dbReference type="ChEBI" id="CHEBI:30616"/>
    </ligand>
</feature>
<accession>B0VTL6</accession>
<comment type="function">
    <text evidence="1">Phosphorylation of dTMP to form dTDP in both de novo and salvage pathways of dTTP synthesis.</text>
</comment>
<comment type="catalytic activity">
    <reaction evidence="1">
        <text>dTMP + ATP = dTDP + ADP</text>
        <dbReference type="Rhea" id="RHEA:13517"/>
        <dbReference type="ChEBI" id="CHEBI:30616"/>
        <dbReference type="ChEBI" id="CHEBI:58369"/>
        <dbReference type="ChEBI" id="CHEBI:63528"/>
        <dbReference type="ChEBI" id="CHEBI:456216"/>
        <dbReference type="EC" id="2.7.4.9"/>
    </reaction>
</comment>
<comment type="similarity">
    <text evidence="1">Belongs to the thymidylate kinase family.</text>
</comment>
<proteinExistence type="inferred from homology"/>
<sequence>MFISFEGTEGVGKTTLIRKIHQHFEEQGKQVVLTREPGGTPLAEQIRSMLLAVNHDENMSHDTELLLIYAARAQHLQQVILPALESNKIVLSDRFTDASFAYQCSGRGLSQDKLQLLNQNFVSRMPEVTFWLDAPIELGMNRARERGALDRFEQEKLSFFTKVREGYETLWKAEPERIKRLDATQSPDQVFEQALQYLA</sequence>
<evidence type="ECO:0000255" key="1">
    <source>
        <dbReference type="HAMAP-Rule" id="MF_00165"/>
    </source>
</evidence>
<protein>
    <recommendedName>
        <fullName evidence="1">Thymidylate kinase</fullName>
        <ecNumber evidence="1">2.7.4.9</ecNumber>
    </recommendedName>
    <alternativeName>
        <fullName evidence="1">dTMP kinase</fullName>
    </alternativeName>
</protein>
<keyword id="KW-0067">ATP-binding</keyword>
<keyword id="KW-0418">Kinase</keyword>
<keyword id="KW-0545">Nucleotide biosynthesis</keyword>
<keyword id="KW-0547">Nucleotide-binding</keyword>
<keyword id="KW-0808">Transferase</keyword>
<dbReference type="EC" id="2.7.4.9" evidence="1"/>
<dbReference type="EMBL" id="CU468230">
    <property type="protein sequence ID" value="CAP00303.1"/>
    <property type="molecule type" value="Genomic_DNA"/>
</dbReference>
<dbReference type="SMR" id="B0VTL6"/>
<dbReference type="KEGG" id="abm:ABSDF0943"/>
<dbReference type="HOGENOM" id="CLU_049131_0_2_6"/>
<dbReference type="Proteomes" id="UP000001741">
    <property type="component" value="Chromosome"/>
</dbReference>
<dbReference type="GO" id="GO:0005829">
    <property type="term" value="C:cytosol"/>
    <property type="evidence" value="ECO:0007669"/>
    <property type="project" value="TreeGrafter"/>
</dbReference>
<dbReference type="GO" id="GO:0005524">
    <property type="term" value="F:ATP binding"/>
    <property type="evidence" value="ECO:0007669"/>
    <property type="project" value="UniProtKB-UniRule"/>
</dbReference>
<dbReference type="GO" id="GO:0004798">
    <property type="term" value="F:dTMP kinase activity"/>
    <property type="evidence" value="ECO:0007669"/>
    <property type="project" value="UniProtKB-UniRule"/>
</dbReference>
<dbReference type="GO" id="GO:0006233">
    <property type="term" value="P:dTDP biosynthetic process"/>
    <property type="evidence" value="ECO:0007669"/>
    <property type="project" value="InterPro"/>
</dbReference>
<dbReference type="GO" id="GO:0006235">
    <property type="term" value="P:dTTP biosynthetic process"/>
    <property type="evidence" value="ECO:0007669"/>
    <property type="project" value="UniProtKB-UniRule"/>
</dbReference>
<dbReference type="GO" id="GO:0006227">
    <property type="term" value="P:dUDP biosynthetic process"/>
    <property type="evidence" value="ECO:0007669"/>
    <property type="project" value="TreeGrafter"/>
</dbReference>
<dbReference type="CDD" id="cd01672">
    <property type="entry name" value="TMPK"/>
    <property type="match status" value="1"/>
</dbReference>
<dbReference type="FunFam" id="3.40.50.300:FF:000225">
    <property type="entry name" value="Thymidylate kinase"/>
    <property type="match status" value="1"/>
</dbReference>
<dbReference type="Gene3D" id="3.40.50.300">
    <property type="entry name" value="P-loop containing nucleotide triphosphate hydrolases"/>
    <property type="match status" value="1"/>
</dbReference>
<dbReference type="HAMAP" id="MF_00165">
    <property type="entry name" value="Thymidylate_kinase"/>
    <property type="match status" value="1"/>
</dbReference>
<dbReference type="InterPro" id="IPR027417">
    <property type="entry name" value="P-loop_NTPase"/>
</dbReference>
<dbReference type="InterPro" id="IPR039430">
    <property type="entry name" value="Thymidylate_kin-like_dom"/>
</dbReference>
<dbReference type="InterPro" id="IPR018094">
    <property type="entry name" value="Thymidylate_kinase"/>
</dbReference>
<dbReference type="NCBIfam" id="TIGR00041">
    <property type="entry name" value="DTMP_kinase"/>
    <property type="match status" value="1"/>
</dbReference>
<dbReference type="PANTHER" id="PTHR10344">
    <property type="entry name" value="THYMIDYLATE KINASE"/>
    <property type="match status" value="1"/>
</dbReference>
<dbReference type="PANTHER" id="PTHR10344:SF4">
    <property type="entry name" value="UMP-CMP KINASE 2, MITOCHONDRIAL"/>
    <property type="match status" value="1"/>
</dbReference>
<dbReference type="Pfam" id="PF02223">
    <property type="entry name" value="Thymidylate_kin"/>
    <property type="match status" value="1"/>
</dbReference>
<dbReference type="SUPFAM" id="SSF52540">
    <property type="entry name" value="P-loop containing nucleoside triphosphate hydrolases"/>
    <property type="match status" value="1"/>
</dbReference>
<name>KTHY_ACIBS</name>
<reference key="1">
    <citation type="journal article" date="2008" name="PLoS ONE">
        <title>Comparative analysis of Acinetobacters: three genomes for three lifestyles.</title>
        <authorList>
            <person name="Vallenet D."/>
            <person name="Nordmann P."/>
            <person name="Barbe V."/>
            <person name="Poirel L."/>
            <person name="Mangenot S."/>
            <person name="Bataille E."/>
            <person name="Dossat C."/>
            <person name="Gas S."/>
            <person name="Kreimeyer A."/>
            <person name="Lenoble P."/>
            <person name="Oztas S."/>
            <person name="Poulain J."/>
            <person name="Segurens B."/>
            <person name="Robert C."/>
            <person name="Abergel C."/>
            <person name="Claverie J.-M."/>
            <person name="Raoult D."/>
            <person name="Medigue C."/>
            <person name="Weissenbach J."/>
            <person name="Cruveiller S."/>
        </authorList>
    </citation>
    <scope>NUCLEOTIDE SEQUENCE [LARGE SCALE GENOMIC DNA]</scope>
    <source>
        <strain>SDF</strain>
    </source>
</reference>